<reference key="1">
    <citation type="journal article" date="1991" name="Plant Mol. Biol.">
        <title>Promoter for a Brassica napus ribulose bisphosphate carboxylase/oxygenase small subunit gene binds multiple nuclear factors and contains a negative-strand open reading frame encoding a putative transmembrane protein.</title>
        <authorList>
            <person name="Nantel A.M."/>
            <person name="Lafleur F."/>
            <person name="Boivin R."/>
            <person name="Baszczynski C.L."/>
            <person name="Bellemare G."/>
        </authorList>
    </citation>
    <scope>NUCLEOTIDE SEQUENCE [GENOMIC DNA]</scope>
    <source>
        <strain>cv. Westar</strain>
    </source>
</reference>
<proteinExistence type="inferred from homology"/>
<sequence>MASSMLSSAAVVTSPAQATMVAPFTGLKSSAAFPVTRKANNDITSIASNGGRVSCMKVWPPVGKKKFETLSYLPDLTEVELGKEVDYLLRNKWIPCVEFELEHGFVYREHGSTPGYYDGRYWTMWKLPLFGCTDSAQVLKEVQECKTEYPNAFIRIIGFDNNRQVQCISFIAYKPPSFTGA</sequence>
<feature type="transit peptide" description="Chloroplast" evidence="1">
    <location>
        <begin position="1"/>
        <end position="54"/>
    </location>
</feature>
<feature type="chain" id="PRO_0000031470" description="Ribulose bisphosphate carboxylase small subunit, chloroplastic 2" evidence="1">
    <location>
        <begin position="55"/>
        <end position="181"/>
    </location>
</feature>
<protein>
    <recommendedName>
        <fullName evidence="1">Ribulose bisphosphate carboxylase small subunit, chloroplastic 2</fullName>
        <shortName evidence="1">RuBisCO small subunit 2</shortName>
    </recommendedName>
</protein>
<organism>
    <name type="scientific">Brassica napus</name>
    <name type="common">Rape</name>
    <dbReference type="NCBI Taxonomy" id="3708"/>
    <lineage>
        <taxon>Eukaryota</taxon>
        <taxon>Viridiplantae</taxon>
        <taxon>Streptophyta</taxon>
        <taxon>Embryophyta</taxon>
        <taxon>Tracheophyta</taxon>
        <taxon>Spermatophyta</taxon>
        <taxon>Magnoliopsida</taxon>
        <taxon>eudicotyledons</taxon>
        <taxon>Gunneridae</taxon>
        <taxon>Pentapetalae</taxon>
        <taxon>rosids</taxon>
        <taxon>malvids</taxon>
        <taxon>Brassicales</taxon>
        <taxon>Brassicaceae</taxon>
        <taxon>Brassiceae</taxon>
        <taxon>Brassica</taxon>
    </lineage>
</organism>
<dbReference type="EMBL" id="X55937">
    <property type="protein sequence ID" value="CAA39402.1"/>
    <property type="molecule type" value="Genomic_DNA"/>
</dbReference>
<dbReference type="PIR" id="S16253">
    <property type="entry name" value="RKRPF1"/>
</dbReference>
<dbReference type="RefSeq" id="NP_001413750.1">
    <property type="nucleotide sequence ID" value="NM_001426821.1"/>
</dbReference>
<dbReference type="RefSeq" id="XP_013725634.1">
    <property type="nucleotide sequence ID" value="XM_013870180.1"/>
</dbReference>
<dbReference type="RefSeq" id="XP_013741773.1">
    <property type="nucleotide sequence ID" value="XM_013886319.1"/>
</dbReference>
<dbReference type="SMR" id="P27985"/>
<dbReference type="EnsemblPlants" id="CDY71122">
    <property type="protein sequence ID" value="CDY71122"/>
    <property type="gene ID" value="GSBRNA2T00011400001"/>
</dbReference>
<dbReference type="GeneID" id="125607892"/>
<dbReference type="Gramene" id="CDY71122">
    <property type="protein sequence ID" value="CDY71122"/>
    <property type="gene ID" value="GSBRNA2T00011400001"/>
</dbReference>
<dbReference type="OMA" id="HGNKMFE"/>
<dbReference type="OrthoDB" id="1029394at2759"/>
<dbReference type="GO" id="GO:0009507">
    <property type="term" value="C:chloroplast"/>
    <property type="evidence" value="ECO:0007669"/>
    <property type="project" value="UniProtKB-SubCell"/>
</dbReference>
<dbReference type="GO" id="GO:0016984">
    <property type="term" value="F:ribulose-bisphosphate carboxylase activity"/>
    <property type="evidence" value="ECO:0007669"/>
    <property type="project" value="UniProtKB-UniRule"/>
</dbReference>
<dbReference type="GO" id="GO:0009853">
    <property type="term" value="P:photorespiration"/>
    <property type="evidence" value="ECO:0007669"/>
    <property type="project" value="UniProtKB-KW"/>
</dbReference>
<dbReference type="GO" id="GO:0019253">
    <property type="term" value="P:reductive pentose-phosphate cycle"/>
    <property type="evidence" value="ECO:0007669"/>
    <property type="project" value="UniProtKB-UniRule"/>
</dbReference>
<dbReference type="CDD" id="cd03527">
    <property type="entry name" value="RuBisCO_small"/>
    <property type="match status" value="1"/>
</dbReference>
<dbReference type="FunFam" id="3.30.190.10:FF:000001">
    <property type="entry name" value="Ribulose bisphosphate carboxylase small chain, chloroplastic"/>
    <property type="match status" value="1"/>
</dbReference>
<dbReference type="Gene3D" id="3.30.190.10">
    <property type="entry name" value="Ribulose bisphosphate carboxylase, small subunit"/>
    <property type="match status" value="1"/>
</dbReference>
<dbReference type="HAMAP" id="MF_00859">
    <property type="entry name" value="RuBisCO_S_bact"/>
    <property type="match status" value="1"/>
</dbReference>
<dbReference type="InterPro" id="IPR024681">
    <property type="entry name" value="RuBisCO_ssu"/>
</dbReference>
<dbReference type="InterPro" id="IPR000894">
    <property type="entry name" value="RuBisCO_ssu_dom"/>
</dbReference>
<dbReference type="InterPro" id="IPR024680">
    <property type="entry name" value="RuBisCO_ssu_N"/>
</dbReference>
<dbReference type="InterPro" id="IPR036385">
    <property type="entry name" value="RuBisCO_ssu_sf"/>
</dbReference>
<dbReference type="PANTHER" id="PTHR31262">
    <property type="entry name" value="RIBULOSE BISPHOSPHATE CARBOXYLASE SMALL CHAIN 1, CHLOROPLASTIC"/>
    <property type="match status" value="1"/>
</dbReference>
<dbReference type="PANTHER" id="PTHR31262:SF10">
    <property type="entry name" value="RIBULOSE BISPHOSPHATE CARBOXYLASE SMALL SUBUNIT 1A, CHLOROPLASTIC-RELATED"/>
    <property type="match status" value="1"/>
</dbReference>
<dbReference type="Pfam" id="PF12338">
    <property type="entry name" value="RbcS"/>
    <property type="match status" value="1"/>
</dbReference>
<dbReference type="Pfam" id="PF00101">
    <property type="entry name" value="RuBisCO_small"/>
    <property type="match status" value="1"/>
</dbReference>
<dbReference type="PRINTS" id="PR00152">
    <property type="entry name" value="RUBISCOSMALL"/>
</dbReference>
<dbReference type="SMART" id="SM00961">
    <property type="entry name" value="RuBisCO_small"/>
    <property type="match status" value="1"/>
</dbReference>
<dbReference type="SUPFAM" id="SSF55239">
    <property type="entry name" value="RuBisCO, small subunit"/>
    <property type="match status" value="1"/>
</dbReference>
<evidence type="ECO:0000255" key="1">
    <source>
        <dbReference type="HAMAP-Rule" id="MF_00860"/>
    </source>
</evidence>
<accession>P27985</accession>
<keyword id="KW-0113">Calvin cycle</keyword>
<keyword id="KW-0120">Carbon dioxide fixation</keyword>
<keyword id="KW-0150">Chloroplast</keyword>
<keyword id="KW-0601">Photorespiration</keyword>
<keyword id="KW-0602">Photosynthesis</keyword>
<keyword id="KW-0934">Plastid</keyword>
<keyword id="KW-0809">Transit peptide</keyword>
<name>RBS2_BRANA</name>
<comment type="function">
    <text evidence="1">RuBisCO catalyzes two reactions: the carboxylation of D-ribulose 1,5-bisphosphate, the primary event in carbon dioxide fixation, as well as the oxidative fragmentation of the pentose substrate. Both reactions occur simultaneously and in competition at the same active site. Although the small subunit is not catalytic it is essential for maximal activity.</text>
</comment>
<comment type="subunit">
    <text evidence="1">Heterohexadecamer of 8 large and 8 small subunits.</text>
</comment>
<comment type="subcellular location">
    <subcellularLocation>
        <location evidence="1">Plastid</location>
        <location evidence="1">Chloroplast</location>
    </subcellularLocation>
</comment>
<comment type="miscellaneous">
    <text evidence="1">The basic functional RuBisCO is composed of a large chain homodimer in a 'head-to-tail' conformation. In form I RuBisCO this homodimer is arranged in a barrel-like tetramer with the small subunits forming a tetrameric 'cap' on each end of the 'barrel'.</text>
</comment>
<comment type="similarity">
    <text evidence="1">Belongs to the RuBisCO small chain family.</text>
</comment>
<gene>
    <name evidence="1" type="primary">RBCS2</name>
    <name type="synonym">RBCS F1</name>
</gene>